<name>YJM5_SCHPO</name>
<comment type="subcellular location">
    <subcellularLocation>
        <location evidence="2">Endoplasmic reticulum</location>
    </subcellularLocation>
</comment>
<reference key="1">
    <citation type="journal article" date="2002" name="Nature">
        <title>The genome sequence of Schizosaccharomyces pombe.</title>
        <authorList>
            <person name="Wood V."/>
            <person name="Gwilliam R."/>
            <person name="Rajandream M.A."/>
            <person name="Lyne M.H."/>
            <person name="Lyne R."/>
            <person name="Stewart A."/>
            <person name="Sgouros J.G."/>
            <person name="Peat N."/>
            <person name="Hayles J."/>
            <person name="Baker S.G."/>
            <person name="Basham D."/>
            <person name="Bowman S."/>
            <person name="Brooks K."/>
            <person name="Brown D."/>
            <person name="Brown S."/>
            <person name="Chillingworth T."/>
            <person name="Churcher C.M."/>
            <person name="Collins M."/>
            <person name="Connor R."/>
            <person name="Cronin A."/>
            <person name="Davis P."/>
            <person name="Feltwell T."/>
            <person name="Fraser A."/>
            <person name="Gentles S."/>
            <person name="Goble A."/>
            <person name="Hamlin N."/>
            <person name="Harris D.E."/>
            <person name="Hidalgo J."/>
            <person name="Hodgson G."/>
            <person name="Holroyd S."/>
            <person name="Hornsby T."/>
            <person name="Howarth S."/>
            <person name="Huckle E.J."/>
            <person name="Hunt S."/>
            <person name="Jagels K."/>
            <person name="James K.D."/>
            <person name="Jones L."/>
            <person name="Jones M."/>
            <person name="Leather S."/>
            <person name="McDonald S."/>
            <person name="McLean J."/>
            <person name="Mooney P."/>
            <person name="Moule S."/>
            <person name="Mungall K.L."/>
            <person name="Murphy L.D."/>
            <person name="Niblett D."/>
            <person name="Odell C."/>
            <person name="Oliver K."/>
            <person name="O'Neil S."/>
            <person name="Pearson D."/>
            <person name="Quail M.A."/>
            <person name="Rabbinowitsch E."/>
            <person name="Rutherford K.M."/>
            <person name="Rutter S."/>
            <person name="Saunders D."/>
            <person name="Seeger K."/>
            <person name="Sharp S."/>
            <person name="Skelton J."/>
            <person name="Simmonds M.N."/>
            <person name="Squares R."/>
            <person name="Squares S."/>
            <person name="Stevens K."/>
            <person name="Taylor K."/>
            <person name="Taylor R.G."/>
            <person name="Tivey A."/>
            <person name="Walsh S.V."/>
            <person name="Warren T."/>
            <person name="Whitehead S."/>
            <person name="Woodward J.R."/>
            <person name="Volckaert G."/>
            <person name="Aert R."/>
            <person name="Robben J."/>
            <person name="Grymonprez B."/>
            <person name="Weltjens I."/>
            <person name="Vanstreels E."/>
            <person name="Rieger M."/>
            <person name="Schaefer M."/>
            <person name="Mueller-Auer S."/>
            <person name="Gabel C."/>
            <person name="Fuchs M."/>
            <person name="Duesterhoeft A."/>
            <person name="Fritzc C."/>
            <person name="Holzer E."/>
            <person name="Moestl D."/>
            <person name="Hilbert H."/>
            <person name="Borzym K."/>
            <person name="Langer I."/>
            <person name="Beck A."/>
            <person name="Lehrach H."/>
            <person name="Reinhardt R."/>
            <person name="Pohl T.M."/>
            <person name="Eger P."/>
            <person name="Zimmermann W."/>
            <person name="Wedler H."/>
            <person name="Wambutt R."/>
            <person name="Purnelle B."/>
            <person name="Goffeau A."/>
            <person name="Cadieu E."/>
            <person name="Dreano S."/>
            <person name="Gloux S."/>
            <person name="Lelaure V."/>
            <person name="Mottier S."/>
            <person name="Galibert F."/>
            <person name="Aves S.J."/>
            <person name="Xiang Z."/>
            <person name="Hunt C."/>
            <person name="Moore K."/>
            <person name="Hurst S.M."/>
            <person name="Lucas M."/>
            <person name="Rochet M."/>
            <person name="Gaillardin C."/>
            <person name="Tallada V.A."/>
            <person name="Garzon A."/>
            <person name="Thode G."/>
            <person name="Daga R.R."/>
            <person name="Cruzado L."/>
            <person name="Jimenez J."/>
            <person name="Sanchez M."/>
            <person name="del Rey F."/>
            <person name="Benito J."/>
            <person name="Dominguez A."/>
            <person name="Revuelta J.L."/>
            <person name="Moreno S."/>
            <person name="Armstrong J."/>
            <person name="Forsburg S.L."/>
            <person name="Cerutti L."/>
            <person name="Lowe T."/>
            <person name="McCombie W.R."/>
            <person name="Paulsen I."/>
            <person name="Potashkin J."/>
            <person name="Shpakovski G.V."/>
            <person name="Ussery D."/>
            <person name="Barrell B.G."/>
            <person name="Nurse P."/>
        </authorList>
    </citation>
    <scope>NUCLEOTIDE SEQUENCE [LARGE SCALE GENOMIC DNA]</scope>
    <source>
        <strain>972 / ATCC 24843</strain>
    </source>
</reference>
<reference key="2">
    <citation type="journal article" date="2006" name="Nat. Biotechnol.">
        <title>ORFeome cloning and global analysis of protein localization in the fission yeast Schizosaccharomyces pombe.</title>
        <authorList>
            <person name="Matsuyama A."/>
            <person name="Arai R."/>
            <person name="Yashiroda Y."/>
            <person name="Shirai A."/>
            <person name="Kamata A."/>
            <person name="Sekido S."/>
            <person name="Kobayashi Y."/>
            <person name="Hashimoto A."/>
            <person name="Hamamoto M."/>
            <person name="Hiraoka Y."/>
            <person name="Horinouchi S."/>
            <person name="Yoshida M."/>
        </authorList>
    </citation>
    <scope>SUBCELLULAR LOCATION [LARGE SCALE ANALYSIS]</scope>
</reference>
<proteinExistence type="inferred from homology"/>
<organism>
    <name type="scientific">Schizosaccharomyces pombe (strain 972 / ATCC 24843)</name>
    <name type="common">Fission yeast</name>
    <dbReference type="NCBI Taxonomy" id="284812"/>
    <lineage>
        <taxon>Eukaryota</taxon>
        <taxon>Fungi</taxon>
        <taxon>Dikarya</taxon>
        <taxon>Ascomycota</taxon>
        <taxon>Taphrinomycotina</taxon>
        <taxon>Schizosaccharomycetes</taxon>
        <taxon>Schizosaccharomycetales</taxon>
        <taxon>Schizosaccharomycetaceae</taxon>
        <taxon>Schizosaccharomyces</taxon>
    </lineage>
</organism>
<gene>
    <name type="ORF">SPCC1020.05</name>
</gene>
<keyword id="KW-0256">Endoplasmic reticulum</keyword>
<keyword id="KW-1185">Reference proteome</keyword>
<keyword id="KW-0732">Signal</keyword>
<dbReference type="EMBL" id="CU329672">
    <property type="protein sequence ID" value="CAA18993.1"/>
    <property type="molecule type" value="Genomic_DNA"/>
</dbReference>
<dbReference type="PIR" id="T40835">
    <property type="entry name" value="T40835"/>
</dbReference>
<dbReference type="BioGRID" id="275409">
    <property type="interactions" value="31"/>
</dbReference>
<dbReference type="FunCoup" id="O59759">
    <property type="interactions" value="59"/>
</dbReference>
<dbReference type="STRING" id="284812.O59759"/>
<dbReference type="iPTMnet" id="O59759"/>
<dbReference type="PaxDb" id="4896-SPCC1020.05.1"/>
<dbReference type="EnsemblFungi" id="SPCC1020.05.1">
    <property type="protein sequence ID" value="SPCC1020.05.1:pep"/>
    <property type="gene ID" value="SPCC1020.05"/>
</dbReference>
<dbReference type="KEGG" id="spo:2538828"/>
<dbReference type="PomBase" id="SPCC1020.05"/>
<dbReference type="VEuPathDB" id="FungiDB:SPCC1020.05"/>
<dbReference type="eggNOG" id="KOG1432">
    <property type="taxonomic scope" value="Eukaryota"/>
</dbReference>
<dbReference type="HOGENOM" id="CLU_019692_4_1_1"/>
<dbReference type="InParanoid" id="O59759"/>
<dbReference type="OMA" id="HVNDYCS"/>
<dbReference type="PhylomeDB" id="O59759"/>
<dbReference type="PRO" id="PR:O59759"/>
<dbReference type="Proteomes" id="UP000002485">
    <property type="component" value="Chromosome III"/>
</dbReference>
<dbReference type="GO" id="GO:0005783">
    <property type="term" value="C:endoplasmic reticulum"/>
    <property type="evidence" value="ECO:0007005"/>
    <property type="project" value="PomBase"/>
</dbReference>
<dbReference type="GO" id="GO:0004721">
    <property type="term" value="F:phosphoprotein phosphatase activity"/>
    <property type="evidence" value="ECO:0000318"/>
    <property type="project" value="GO_Central"/>
</dbReference>
<dbReference type="GO" id="GO:0030968">
    <property type="term" value="P:endoplasmic reticulum unfolded protein response"/>
    <property type="evidence" value="ECO:0000266"/>
    <property type="project" value="PomBase"/>
</dbReference>
<dbReference type="CDD" id="cd07383">
    <property type="entry name" value="MPP_Dcr2"/>
    <property type="match status" value="1"/>
</dbReference>
<dbReference type="Gene3D" id="3.60.21.10">
    <property type="match status" value="1"/>
</dbReference>
<dbReference type="InterPro" id="IPR004843">
    <property type="entry name" value="Calcineurin-like_PHP_ApaH"/>
</dbReference>
<dbReference type="InterPro" id="IPR029052">
    <property type="entry name" value="Metallo-depent_PP-like"/>
</dbReference>
<dbReference type="PANTHER" id="PTHR32440:SF0">
    <property type="entry name" value="PHOSPHATASE DCR2-RELATED"/>
    <property type="match status" value="1"/>
</dbReference>
<dbReference type="PANTHER" id="PTHR32440">
    <property type="entry name" value="PHOSPHATASE DCR2-RELATED-RELATED"/>
    <property type="match status" value="1"/>
</dbReference>
<dbReference type="Pfam" id="PF00149">
    <property type="entry name" value="Metallophos"/>
    <property type="match status" value="1"/>
</dbReference>
<dbReference type="SUPFAM" id="SSF56300">
    <property type="entry name" value="Metallo-dependent phosphatases"/>
    <property type="match status" value="1"/>
</dbReference>
<evidence type="ECO:0000255" key="1"/>
<evidence type="ECO:0000269" key="2">
    <source>
    </source>
</evidence>
<accession>O59759</accession>
<sequence>MMLPKRNIIHFLRKRAIFIVAAFIALLTVDYSLNTIEITDSKSGPFSLNTPIEDIRLVECFSFSPFCRPVLEFWKWARTSRNLYRSRIPWKRAYLYVKRPALYIPGETVLVEQVYVDRQLEKRNKHGIQIRYGTDGDICEFNTLLGEDVVELREGWSAVLNDFIYLGQPVLLTQRPCETPPTPSIEALKRKELSSVTLTYDDEEKKTIKILQLSDLHYSNSDRPCRDPYPYETAEDCMADAKTTAFVNELLQLEEPDFVLLTGDLINGDTSRDARSSLMKAVSPFVDYNVPFAVNFGNHDDLGDLSREELAKILSQIPGSMGLIGNVSGVGNFVLHSPRKFAIYVLDTKGDTSNRRLCPGYDAITEDQLEWLSSKVADFKYEPIQMAVLHIPLKEFCETEDLVGAFREPCSYSICDPNTAKALKSLRIPLAIAGHDHVNDFCGIHPDYNTYFCFAGGAGFGGYGGHGGYVRRARVFELDPVERAVRTWKRLEWPPEDRKLMLDVQTILV</sequence>
<protein>
    <recommendedName>
        <fullName>Uncharacterized protein C1020.05</fullName>
    </recommendedName>
</protein>
<feature type="signal peptide" evidence="1">
    <location>
        <begin position="1"/>
        <end position="32"/>
    </location>
</feature>
<feature type="chain" id="PRO_0000310850" description="Uncharacterized protein C1020.05">
    <location>
        <begin position="33"/>
        <end position="509"/>
    </location>
</feature>